<sequence length="690" mass="75335">MEKYDEDIALQASKFLEDLSLCDGHSRLYGPVGDMLLSNDHILVADHRGRRLNGSLTQYLPHSSSDKVYPLGSSQLRSMNGSRGDGYMDEGIYKSDVALPCYSGISEKNKRYSAELYRHSCGNSFEGVPISAKQGGITALYSGGKMSNSCMSATSPRSSMASSASSSQEHSKYSSPRSSISSNALSLDKFSSPRSSLVVPGQQEKYTSPRSSLGQYEGGVLSPRSSYASTTSDTSKHSSPRASLTSYDCGSKPSSNRTSGISMGYDQRHISPRSSTASQYSCTTSPRSSYSDSRYVPSGNPDLDGVGGHGSLVSPRSSMCLQEGRSATLGSCNPSVVSPRSSISSHSSRSSRSSRGSMGAYTDLTVPSPRSSMLGTSLQEETLVQDLGEACHYKVLTQSPPRQEQHQTITSSHDLNSGAVASYNFSSAKGSATVHRFKLPYQVTPSRESGPSQAERRLEALTLELEKELELHMKKEYFGICIKCGKGVYGASQACQAMGNLYHTNCFTCCSCGRRLRGKAFYNVNGKVYCEEDFLYSGFQQTADKCFVCGHLIMEMILQALGKSYHPGCFRCVVCNECLDGVPFTVDVENNIYCVKDYHTVFAPKCASCNQPILPAQGSEETIRVVSMDKDYHVECYHCEDCQLQLNDEEGRRCYPLEGHLLCHSCHIRRLSVNVPPHQPPSYPMHVTEL</sequence>
<evidence type="ECO:0000250" key="1"/>
<evidence type="ECO:0000255" key="2">
    <source>
        <dbReference type="PROSITE-ProRule" id="PRU00125"/>
    </source>
</evidence>
<evidence type="ECO:0000256" key="3">
    <source>
        <dbReference type="SAM" id="MobiDB-lite"/>
    </source>
</evidence>
<evidence type="ECO:0000269" key="4">
    <source>
    </source>
</evidence>
<evidence type="ECO:0000269" key="5">
    <source>
    </source>
</evidence>
<evidence type="ECO:0000305" key="6"/>
<gene>
    <name type="primary">wtip</name>
</gene>
<reference key="1">
    <citation type="journal article" date="2008" name="Dev. Cell">
        <title>Ajuba LIM proteins are snail/slug corepressors required for neural crest development in Xenopus.</title>
        <authorList>
            <person name="Langer E.M."/>
            <person name="Feng Y."/>
            <person name="Zhaoyuan H."/>
            <person name="Rauscher F.J. III"/>
            <person name="Kroll K.L."/>
            <person name="Longmore G.D."/>
        </authorList>
    </citation>
    <scope>NUCLEOTIDE SEQUENCE [MRNA]</scope>
    <scope>FUNCTION</scope>
</reference>
<reference key="2">
    <citation type="journal article" date="2016" name="Sci. Rep.">
        <title>Prickle3 synergizes with Wtip to regulate basal body organization and cilia growth.</title>
        <authorList>
            <person name="Chu C.W."/>
            <person name="Ossipova O."/>
            <person name="Ioannou A."/>
            <person name="Sokol S.Y."/>
        </authorList>
    </citation>
    <scope>INTERACTION WITH PRICKLE3</scope>
    <scope>FUNCTION</scope>
</reference>
<proteinExistence type="evidence at protein level"/>
<feature type="chain" id="PRO_0000328863" description="Wilms tumor protein 1-interacting protein homolog">
    <location>
        <begin position="1"/>
        <end position="690"/>
    </location>
</feature>
<feature type="domain" description="LIM zinc-binding 1" evidence="2">
    <location>
        <begin position="479"/>
        <end position="540"/>
    </location>
</feature>
<feature type="domain" description="LIM zinc-binding 2" evidence="2">
    <location>
        <begin position="544"/>
        <end position="603"/>
    </location>
</feature>
<feature type="domain" description="LIM zinc-binding 3" evidence="2">
    <location>
        <begin position="604"/>
        <end position="673"/>
    </location>
</feature>
<feature type="region of interest" description="Disordered" evidence="3">
    <location>
        <begin position="151"/>
        <end position="316"/>
    </location>
</feature>
<feature type="region of interest" description="Disordered" evidence="3">
    <location>
        <begin position="328"/>
        <end position="372"/>
    </location>
</feature>
<feature type="compositionally biased region" description="Low complexity" evidence="3">
    <location>
        <begin position="152"/>
        <end position="186"/>
    </location>
</feature>
<feature type="compositionally biased region" description="Polar residues" evidence="3">
    <location>
        <begin position="204"/>
        <end position="214"/>
    </location>
</feature>
<feature type="compositionally biased region" description="Polar residues" evidence="3">
    <location>
        <begin position="223"/>
        <end position="233"/>
    </location>
</feature>
<feature type="compositionally biased region" description="Polar residues" evidence="3">
    <location>
        <begin position="240"/>
        <end position="261"/>
    </location>
</feature>
<feature type="compositionally biased region" description="Polar residues" evidence="3">
    <location>
        <begin position="272"/>
        <end position="292"/>
    </location>
</feature>
<feature type="compositionally biased region" description="Low complexity" evidence="3">
    <location>
        <begin position="335"/>
        <end position="357"/>
    </location>
</feature>
<name>WTIP_XENLA</name>
<protein>
    <recommendedName>
        <fullName>Wilms tumor protein 1-interacting protein homolog</fullName>
        <shortName>WT1-interacting protein homolog</shortName>
        <shortName>xWtip</shortName>
    </recommendedName>
</protein>
<dbReference type="EMBL" id="EU257484">
    <property type="protein sequence ID" value="ABX55937.1"/>
    <property type="molecule type" value="mRNA"/>
</dbReference>
<dbReference type="RefSeq" id="NP_001106366.1">
    <property type="nucleotide sequence ID" value="NM_001112895.1"/>
</dbReference>
<dbReference type="GeneID" id="100127345"/>
<dbReference type="KEGG" id="xla:100127345"/>
<dbReference type="AGR" id="Xenbase:XB-GENE-1193823"/>
<dbReference type="CTD" id="100127345"/>
<dbReference type="OrthoDB" id="25414at2759"/>
<dbReference type="Proteomes" id="UP000186698">
    <property type="component" value="Chromosome 4L"/>
</dbReference>
<dbReference type="Bgee" id="100127345">
    <property type="expression patterns" value="Expressed in internal ear and 19 other cell types or tissues"/>
</dbReference>
<dbReference type="GO" id="GO:0005912">
    <property type="term" value="C:adherens junction"/>
    <property type="evidence" value="ECO:0000318"/>
    <property type="project" value="GO_Central"/>
</dbReference>
<dbReference type="GO" id="GO:0005634">
    <property type="term" value="C:nucleus"/>
    <property type="evidence" value="ECO:0000318"/>
    <property type="project" value="GO_Central"/>
</dbReference>
<dbReference type="GO" id="GO:0000932">
    <property type="term" value="C:P-body"/>
    <property type="evidence" value="ECO:0000318"/>
    <property type="project" value="GO_Central"/>
</dbReference>
<dbReference type="GO" id="GO:0005667">
    <property type="term" value="C:transcription regulator complex"/>
    <property type="evidence" value="ECO:0000318"/>
    <property type="project" value="GO_Central"/>
</dbReference>
<dbReference type="GO" id="GO:0046872">
    <property type="term" value="F:metal ion binding"/>
    <property type="evidence" value="ECO:0007669"/>
    <property type="project" value="UniProtKB-KW"/>
</dbReference>
<dbReference type="GO" id="GO:0003714">
    <property type="term" value="F:transcription corepressor activity"/>
    <property type="evidence" value="ECO:0000315"/>
    <property type="project" value="UniProtKB"/>
</dbReference>
<dbReference type="GO" id="GO:0030030">
    <property type="term" value="P:cell projection organization"/>
    <property type="evidence" value="ECO:0007669"/>
    <property type="project" value="UniProtKB-KW"/>
</dbReference>
<dbReference type="GO" id="GO:0007010">
    <property type="term" value="P:cytoskeleton organization"/>
    <property type="evidence" value="ECO:0000250"/>
    <property type="project" value="UniProtKB"/>
</dbReference>
<dbReference type="GO" id="GO:0035331">
    <property type="term" value="P:negative regulation of hippo signaling"/>
    <property type="evidence" value="ECO:0000318"/>
    <property type="project" value="GO_Central"/>
</dbReference>
<dbReference type="GO" id="GO:0014032">
    <property type="term" value="P:neural crest cell development"/>
    <property type="evidence" value="ECO:0000315"/>
    <property type="project" value="UniProtKB"/>
</dbReference>
<dbReference type="GO" id="GO:0022604">
    <property type="term" value="P:regulation of cell morphogenesis"/>
    <property type="evidence" value="ECO:0000250"/>
    <property type="project" value="UniProtKB"/>
</dbReference>
<dbReference type="GO" id="GO:0006355">
    <property type="term" value="P:regulation of DNA-templated transcription"/>
    <property type="evidence" value="ECO:0000318"/>
    <property type="project" value="GO_Central"/>
</dbReference>
<dbReference type="GO" id="GO:0001666">
    <property type="term" value="P:response to hypoxia"/>
    <property type="evidence" value="ECO:0000318"/>
    <property type="project" value="GO_Central"/>
</dbReference>
<dbReference type="CDD" id="cd09352">
    <property type="entry name" value="LIM1_Ajuba_like"/>
    <property type="match status" value="1"/>
</dbReference>
<dbReference type="CDD" id="cd09355">
    <property type="entry name" value="LIM2_Ajuba_like"/>
    <property type="match status" value="1"/>
</dbReference>
<dbReference type="CDD" id="cd09438">
    <property type="entry name" value="LIM3_Ajuba_like"/>
    <property type="match status" value="1"/>
</dbReference>
<dbReference type="FunFam" id="2.10.110.10:FF:000028">
    <property type="entry name" value="LIM domain-containing protein 1"/>
    <property type="match status" value="1"/>
</dbReference>
<dbReference type="FunFam" id="2.10.110.10:FF:000036">
    <property type="entry name" value="LIM domain-containing protein 1"/>
    <property type="match status" value="1"/>
</dbReference>
<dbReference type="FunFam" id="2.10.110.10:FF:000037">
    <property type="entry name" value="LIM domain-containing protein 1"/>
    <property type="match status" value="1"/>
</dbReference>
<dbReference type="Gene3D" id="2.10.110.10">
    <property type="entry name" value="Cysteine Rich Protein"/>
    <property type="match status" value="3"/>
</dbReference>
<dbReference type="InterPro" id="IPR047172">
    <property type="entry name" value="Ajuba-like"/>
</dbReference>
<dbReference type="InterPro" id="IPR047245">
    <property type="entry name" value="Ajuba-like_LIM1"/>
</dbReference>
<dbReference type="InterPro" id="IPR047247">
    <property type="entry name" value="Ajuba-like_LIM2"/>
</dbReference>
<dbReference type="InterPro" id="IPR047248">
    <property type="entry name" value="Ajuba-like_LIM3"/>
</dbReference>
<dbReference type="InterPro" id="IPR001781">
    <property type="entry name" value="Znf_LIM"/>
</dbReference>
<dbReference type="PANTHER" id="PTHR24219">
    <property type="entry name" value="LIM DOMAIN-CONTAINING PROTEIN JUB"/>
    <property type="match status" value="1"/>
</dbReference>
<dbReference type="PANTHER" id="PTHR24219:SF6">
    <property type="entry name" value="WILMS TUMOR PROTEIN 1-INTERACTING PROTEIN"/>
    <property type="match status" value="1"/>
</dbReference>
<dbReference type="Pfam" id="PF00412">
    <property type="entry name" value="LIM"/>
    <property type="match status" value="3"/>
</dbReference>
<dbReference type="SMART" id="SM00132">
    <property type="entry name" value="LIM"/>
    <property type="match status" value="3"/>
</dbReference>
<dbReference type="SUPFAM" id="SSF57716">
    <property type="entry name" value="Glucocorticoid receptor-like (DNA-binding domain)"/>
    <property type="match status" value="3"/>
</dbReference>
<dbReference type="PROSITE" id="PS00478">
    <property type="entry name" value="LIM_DOMAIN_1"/>
    <property type="match status" value="2"/>
</dbReference>
<dbReference type="PROSITE" id="PS50023">
    <property type="entry name" value="LIM_DOMAIN_2"/>
    <property type="match status" value="3"/>
</dbReference>
<accession>A9LS46</accession>
<organism>
    <name type="scientific">Xenopus laevis</name>
    <name type="common">African clawed frog</name>
    <dbReference type="NCBI Taxonomy" id="8355"/>
    <lineage>
        <taxon>Eukaryota</taxon>
        <taxon>Metazoa</taxon>
        <taxon>Chordata</taxon>
        <taxon>Craniata</taxon>
        <taxon>Vertebrata</taxon>
        <taxon>Euteleostomi</taxon>
        <taxon>Amphibia</taxon>
        <taxon>Batrachia</taxon>
        <taxon>Anura</taxon>
        <taxon>Pipoidea</taxon>
        <taxon>Pipidae</taxon>
        <taxon>Xenopodinae</taxon>
        <taxon>Xenopus</taxon>
        <taxon>Xenopus</taxon>
    </lineage>
</organism>
<keyword id="KW-0965">Cell junction</keyword>
<keyword id="KW-0970">Cilium biogenesis/degradation</keyword>
<keyword id="KW-0440">LIM domain</keyword>
<keyword id="KW-0479">Metal-binding</keyword>
<keyword id="KW-0539">Nucleus</keyword>
<keyword id="KW-1185">Reference proteome</keyword>
<keyword id="KW-0677">Repeat</keyword>
<keyword id="KW-0678">Repressor</keyword>
<keyword id="KW-0804">Transcription</keyword>
<keyword id="KW-0805">Transcription regulation</keyword>
<keyword id="KW-0862">Zinc</keyword>
<comment type="function">
    <text evidence="1 4 5">May monitor slit diaphragm protein assembly, a specialized adherens junction characteristic of podocytes. In case of podocyte injury, it shuttles into the nucleus and acts as a transcription regulator. Plays a role in the regulation of cell morphology and cytoskeletal organization (By similarity). Acts as a transcriptional corepressor for snai1 and snai2/slug and plays a role in regulating neural crest development. Involved in the organization of the basal body (PubMed:27062996). Involved in cilia growth and positioning (PubMed:27062996).</text>
</comment>
<comment type="subunit">
    <text evidence="5">Interacts with prickle3 (PubMed:27062996).</text>
</comment>
<comment type="subcellular location">
    <subcellularLocation>
        <location evidence="1">Cell junction</location>
        <location evidence="1">Adherens junction</location>
    </subcellularLocation>
    <subcellularLocation>
        <location evidence="1">Nucleus</location>
    </subcellularLocation>
</comment>
<comment type="similarity">
    <text evidence="6">Belongs to the zyxin/ajuba family.</text>
</comment>